<name>GLYA_SHEWM</name>
<reference key="1">
    <citation type="submission" date="2008-02" db="EMBL/GenBank/DDBJ databases">
        <title>Complete sequence of Shewanella woodyi ATCC 51908.</title>
        <authorList>
            <consortium name="US DOE Joint Genome Institute"/>
            <person name="Copeland A."/>
            <person name="Lucas S."/>
            <person name="Lapidus A."/>
            <person name="Glavina del Rio T."/>
            <person name="Dalin E."/>
            <person name="Tice H."/>
            <person name="Bruce D."/>
            <person name="Goodwin L."/>
            <person name="Pitluck S."/>
            <person name="Sims D."/>
            <person name="Brettin T."/>
            <person name="Detter J.C."/>
            <person name="Han C."/>
            <person name="Kuske C.R."/>
            <person name="Schmutz J."/>
            <person name="Larimer F."/>
            <person name="Land M."/>
            <person name="Hauser L."/>
            <person name="Kyrpides N."/>
            <person name="Lykidis A."/>
            <person name="Zhao J.-S."/>
            <person name="Richardson P."/>
        </authorList>
    </citation>
    <scope>NUCLEOTIDE SEQUENCE [LARGE SCALE GENOMIC DNA]</scope>
    <source>
        <strain>ATCC 51908 / MS32</strain>
    </source>
</reference>
<gene>
    <name evidence="1" type="primary">glyA</name>
    <name type="ordered locus">Swoo_1380</name>
</gene>
<protein>
    <recommendedName>
        <fullName evidence="1">Serine hydroxymethyltransferase</fullName>
        <shortName evidence="1">SHMT</shortName>
        <shortName evidence="1">Serine methylase</shortName>
        <ecNumber evidence="1">2.1.2.1</ecNumber>
    </recommendedName>
</protein>
<comment type="function">
    <text evidence="1">Catalyzes the reversible interconversion of serine and glycine with tetrahydrofolate (THF) serving as the one-carbon carrier. This reaction serves as the major source of one-carbon groups required for the biosynthesis of purines, thymidylate, methionine, and other important biomolecules. Also exhibits THF-independent aldolase activity toward beta-hydroxyamino acids, producing glycine and aldehydes, via a retro-aldol mechanism.</text>
</comment>
<comment type="catalytic activity">
    <reaction evidence="1">
        <text>(6R)-5,10-methylene-5,6,7,8-tetrahydrofolate + glycine + H2O = (6S)-5,6,7,8-tetrahydrofolate + L-serine</text>
        <dbReference type="Rhea" id="RHEA:15481"/>
        <dbReference type="ChEBI" id="CHEBI:15377"/>
        <dbReference type="ChEBI" id="CHEBI:15636"/>
        <dbReference type="ChEBI" id="CHEBI:33384"/>
        <dbReference type="ChEBI" id="CHEBI:57305"/>
        <dbReference type="ChEBI" id="CHEBI:57453"/>
        <dbReference type="EC" id="2.1.2.1"/>
    </reaction>
</comment>
<comment type="cofactor">
    <cofactor evidence="1">
        <name>pyridoxal 5'-phosphate</name>
        <dbReference type="ChEBI" id="CHEBI:597326"/>
    </cofactor>
</comment>
<comment type="pathway">
    <text evidence="1">One-carbon metabolism; tetrahydrofolate interconversion.</text>
</comment>
<comment type="pathway">
    <text evidence="1">Amino-acid biosynthesis; glycine biosynthesis; glycine from L-serine: step 1/1.</text>
</comment>
<comment type="subunit">
    <text evidence="1">Homodimer.</text>
</comment>
<comment type="subcellular location">
    <subcellularLocation>
        <location evidence="1">Cytoplasm</location>
    </subcellularLocation>
</comment>
<comment type="similarity">
    <text evidence="1">Belongs to the SHMT family.</text>
</comment>
<feature type="chain" id="PRO_1000091578" description="Serine hydroxymethyltransferase">
    <location>
        <begin position="1"/>
        <end position="418"/>
    </location>
</feature>
<feature type="binding site" evidence="1">
    <location>
        <position position="121"/>
    </location>
    <ligand>
        <name>(6S)-5,6,7,8-tetrahydrofolate</name>
        <dbReference type="ChEBI" id="CHEBI:57453"/>
    </ligand>
</feature>
<feature type="binding site" evidence="1">
    <location>
        <begin position="125"/>
        <end position="127"/>
    </location>
    <ligand>
        <name>(6S)-5,6,7,8-tetrahydrofolate</name>
        <dbReference type="ChEBI" id="CHEBI:57453"/>
    </ligand>
</feature>
<feature type="binding site" evidence="1">
    <location>
        <begin position="356"/>
        <end position="358"/>
    </location>
    <ligand>
        <name>(6S)-5,6,7,8-tetrahydrofolate</name>
        <dbReference type="ChEBI" id="CHEBI:57453"/>
    </ligand>
</feature>
<feature type="site" description="Plays an important role in substrate specificity" evidence="1">
    <location>
        <position position="229"/>
    </location>
</feature>
<feature type="modified residue" description="N6-(pyridoxal phosphate)lysine" evidence="1">
    <location>
        <position position="230"/>
    </location>
</feature>
<evidence type="ECO:0000255" key="1">
    <source>
        <dbReference type="HAMAP-Rule" id="MF_00051"/>
    </source>
</evidence>
<sequence>MLKKDMNIADFDPQLFQAIQDETRRQEEHIELIASENYTSPRVLEAQGSQLTNKYAEGYPGKRYYGGCEHVDIAEELAISRAKELFGATYANVQPHSGSQANAAVFMALLEGGDTVLGMSLAHGGHLTHGSHVSFSGKLYNSVQYGIDETTGKIDYAEVERLAVEHKPKMIIAGFSAYSGIIDWGKFREIADKVGAYLFVDMAHVAGLIAAGIYPNPLPHAHVVTTTTHKTLAGPRGGLILSAIDDEAIYKKLNSAVFPGGQGGPLMHVIAAKAVAFKEALEPEFTAYQEQVVVNAQAMAKTFIERGYDVVSGGTDNHLFLLDLISKDITGKDADAALGLANITVNKNSVPNDPRSPFVTSGLRIGSPAITRRGFKEAQAVELTNWMCDVLDDITNEGTIERVKNQVLELCAKFPVYG</sequence>
<dbReference type="EC" id="2.1.2.1" evidence="1"/>
<dbReference type="EMBL" id="CP000961">
    <property type="protein sequence ID" value="ACA85672.1"/>
    <property type="molecule type" value="Genomic_DNA"/>
</dbReference>
<dbReference type="RefSeq" id="WP_012324018.1">
    <property type="nucleotide sequence ID" value="NC_010506.1"/>
</dbReference>
<dbReference type="SMR" id="B1KJJ9"/>
<dbReference type="STRING" id="392500.Swoo_1380"/>
<dbReference type="KEGG" id="swd:Swoo_1380"/>
<dbReference type="eggNOG" id="COG0112">
    <property type="taxonomic scope" value="Bacteria"/>
</dbReference>
<dbReference type="HOGENOM" id="CLU_022477_2_1_6"/>
<dbReference type="UniPathway" id="UPA00193"/>
<dbReference type="UniPathway" id="UPA00288">
    <property type="reaction ID" value="UER01023"/>
</dbReference>
<dbReference type="Proteomes" id="UP000002168">
    <property type="component" value="Chromosome"/>
</dbReference>
<dbReference type="GO" id="GO:0005829">
    <property type="term" value="C:cytosol"/>
    <property type="evidence" value="ECO:0007669"/>
    <property type="project" value="TreeGrafter"/>
</dbReference>
<dbReference type="GO" id="GO:0004372">
    <property type="term" value="F:glycine hydroxymethyltransferase activity"/>
    <property type="evidence" value="ECO:0007669"/>
    <property type="project" value="UniProtKB-UniRule"/>
</dbReference>
<dbReference type="GO" id="GO:0030170">
    <property type="term" value="F:pyridoxal phosphate binding"/>
    <property type="evidence" value="ECO:0007669"/>
    <property type="project" value="UniProtKB-UniRule"/>
</dbReference>
<dbReference type="GO" id="GO:0019264">
    <property type="term" value="P:glycine biosynthetic process from serine"/>
    <property type="evidence" value="ECO:0007669"/>
    <property type="project" value="UniProtKB-UniRule"/>
</dbReference>
<dbReference type="GO" id="GO:0035999">
    <property type="term" value="P:tetrahydrofolate interconversion"/>
    <property type="evidence" value="ECO:0007669"/>
    <property type="project" value="UniProtKB-UniRule"/>
</dbReference>
<dbReference type="CDD" id="cd00378">
    <property type="entry name" value="SHMT"/>
    <property type="match status" value="1"/>
</dbReference>
<dbReference type="FunFam" id="3.40.640.10:FF:000001">
    <property type="entry name" value="Serine hydroxymethyltransferase"/>
    <property type="match status" value="1"/>
</dbReference>
<dbReference type="FunFam" id="3.90.1150.10:FF:000003">
    <property type="entry name" value="Serine hydroxymethyltransferase"/>
    <property type="match status" value="1"/>
</dbReference>
<dbReference type="Gene3D" id="3.90.1150.10">
    <property type="entry name" value="Aspartate Aminotransferase, domain 1"/>
    <property type="match status" value="1"/>
</dbReference>
<dbReference type="Gene3D" id="3.40.640.10">
    <property type="entry name" value="Type I PLP-dependent aspartate aminotransferase-like (Major domain)"/>
    <property type="match status" value="1"/>
</dbReference>
<dbReference type="HAMAP" id="MF_00051">
    <property type="entry name" value="SHMT"/>
    <property type="match status" value="1"/>
</dbReference>
<dbReference type="InterPro" id="IPR015424">
    <property type="entry name" value="PyrdxlP-dep_Trfase"/>
</dbReference>
<dbReference type="InterPro" id="IPR015421">
    <property type="entry name" value="PyrdxlP-dep_Trfase_major"/>
</dbReference>
<dbReference type="InterPro" id="IPR015422">
    <property type="entry name" value="PyrdxlP-dep_Trfase_small"/>
</dbReference>
<dbReference type="InterPro" id="IPR001085">
    <property type="entry name" value="Ser_HO-MeTrfase"/>
</dbReference>
<dbReference type="InterPro" id="IPR049943">
    <property type="entry name" value="Ser_HO-MeTrfase-like"/>
</dbReference>
<dbReference type="InterPro" id="IPR019798">
    <property type="entry name" value="Ser_HO-MeTrfase_PLP_BS"/>
</dbReference>
<dbReference type="InterPro" id="IPR039429">
    <property type="entry name" value="SHMT-like_dom"/>
</dbReference>
<dbReference type="NCBIfam" id="NF000586">
    <property type="entry name" value="PRK00011.1"/>
    <property type="match status" value="1"/>
</dbReference>
<dbReference type="PANTHER" id="PTHR11680">
    <property type="entry name" value="SERINE HYDROXYMETHYLTRANSFERASE"/>
    <property type="match status" value="1"/>
</dbReference>
<dbReference type="PANTHER" id="PTHR11680:SF50">
    <property type="entry name" value="SERINE HYDROXYMETHYLTRANSFERASE"/>
    <property type="match status" value="1"/>
</dbReference>
<dbReference type="Pfam" id="PF00464">
    <property type="entry name" value="SHMT"/>
    <property type="match status" value="1"/>
</dbReference>
<dbReference type="PIRSF" id="PIRSF000412">
    <property type="entry name" value="SHMT"/>
    <property type="match status" value="1"/>
</dbReference>
<dbReference type="SUPFAM" id="SSF53383">
    <property type="entry name" value="PLP-dependent transferases"/>
    <property type="match status" value="1"/>
</dbReference>
<dbReference type="PROSITE" id="PS00096">
    <property type="entry name" value="SHMT"/>
    <property type="match status" value="1"/>
</dbReference>
<organism>
    <name type="scientific">Shewanella woodyi (strain ATCC 51908 / MS32)</name>
    <dbReference type="NCBI Taxonomy" id="392500"/>
    <lineage>
        <taxon>Bacteria</taxon>
        <taxon>Pseudomonadati</taxon>
        <taxon>Pseudomonadota</taxon>
        <taxon>Gammaproteobacteria</taxon>
        <taxon>Alteromonadales</taxon>
        <taxon>Shewanellaceae</taxon>
        <taxon>Shewanella</taxon>
    </lineage>
</organism>
<accession>B1KJJ9</accession>
<proteinExistence type="inferred from homology"/>
<keyword id="KW-0028">Amino-acid biosynthesis</keyword>
<keyword id="KW-0963">Cytoplasm</keyword>
<keyword id="KW-0554">One-carbon metabolism</keyword>
<keyword id="KW-0663">Pyridoxal phosphate</keyword>
<keyword id="KW-1185">Reference proteome</keyword>
<keyword id="KW-0808">Transferase</keyword>